<evidence type="ECO:0000255" key="1">
    <source>
        <dbReference type="HAMAP-Rule" id="MF_00385"/>
    </source>
</evidence>
<evidence type="ECO:0000256" key="2">
    <source>
        <dbReference type="SAM" id="MobiDB-lite"/>
    </source>
</evidence>
<evidence type="ECO:0000305" key="3"/>
<organism>
    <name type="scientific">Phocaeicola vulgatus (strain ATCC 8482 / DSM 1447 / JCM 5826 / CCUG 4940 / NBRC 14291 / NCTC 11154)</name>
    <name type="common">Bacteroides vulgatus</name>
    <dbReference type="NCBI Taxonomy" id="435590"/>
    <lineage>
        <taxon>Bacteria</taxon>
        <taxon>Pseudomonadati</taxon>
        <taxon>Bacteroidota</taxon>
        <taxon>Bacteroidia</taxon>
        <taxon>Bacteroidales</taxon>
        <taxon>Bacteroidaceae</taxon>
        <taxon>Phocaeicola</taxon>
    </lineage>
</organism>
<gene>
    <name evidence="1" type="primary">rpsP</name>
    <name type="ordered locus">BVU_2753</name>
</gene>
<name>RS16_PHOV8</name>
<keyword id="KW-0687">Ribonucleoprotein</keyword>
<keyword id="KW-0689">Ribosomal protein</keyword>
<reference key="1">
    <citation type="journal article" date="2007" name="PLoS Biol.">
        <title>Evolution of symbiotic bacteria in the distal human intestine.</title>
        <authorList>
            <person name="Xu J."/>
            <person name="Mahowald M.A."/>
            <person name="Ley R.E."/>
            <person name="Lozupone C.A."/>
            <person name="Hamady M."/>
            <person name="Martens E.C."/>
            <person name="Henrissat B."/>
            <person name="Coutinho P.M."/>
            <person name="Minx P."/>
            <person name="Latreille P."/>
            <person name="Cordum H."/>
            <person name="Van Brunt A."/>
            <person name="Kim K."/>
            <person name="Fulton R.S."/>
            <person name="Fulton L.A."/>
            <person name="Clifton S.W."/>
            <person name="Wilson R.K."/>
            <person name="Knight R.D."/>
            <person name="Gordon J.I."/>
        </authorList>
    </citation>
    <scope>NUCLEOTIDE SEQUENCE [LARGE SCALE GENOMIC DNA]</scope>
    <source>
        <strain>ATCC 8482 / DSM 1447 / JCM 5826 / CCUG 4940 / NBRC 14291 / NCTC 11154</strain>
    </source>
</reference>
<comment type="similarity">
    <text evidence="1">Belongs to the bacterial ribosomal protein bS16 family.</text>
</comment>
<feature type="chain" id="PRO_1000049214" description="Small ribosomal subunit protein bS16">
    <location>
        <begin position="1"/>
        <end position="183"/>
    </location>
</feature>
<feature type="region of interest" description="Disordered" evidence="2">
    <location>
        <begin position="149"/>
        <end position="183"/>
    </location>
</feature>
<feature type="compositionally biased region" description="Basic and acidic residues" evidence="2">
    <location>
        <begin position="149"/>
        <end position="161"/>
    </location>
</feature>
<feature type="compositionally biased region" description="Low complexity" evidence="2">
    <location>
        <begin position="162"/>
        <end position="183"/>
    </location>
</feature>
<proteinExistence type="inferred from homology"/>
<protein>
    <recommendedName>
        <fullName evidence="1">Small ribosomal subunit protein bS16</fullName>
    </recommendedName>
    <alternativeName>
        <fullName evidence="3">30S ribosomal protein S16</fullName>
    </alternativeName>
</protein>
<accession>A6L3Y9</accession>
<sequence>MATKIRLQRNGRKSYAFYSIVIADVRAPRDGKFTEKIGTYNPNTNPATVDLNFERALHWVMCGAQPTDTVRNILSKEGVYMKKHLLGGVAKGAFTEAEAEAKFEAWKNNKQSGLATLKAKLDEAKKAEAKARLEAEKKVNEEIAKKVAEKKAAEAAAKAEAEAANAPAEEAPAAEATEAPAEA</sequence>
<dbReference type="EMBL" id="CP000139">
    <property type="protein sequence ID" value="ABR40403.1"/>
    <property type="molecule type" value="Genomic_DNA"/>
</dbReference>
<dbReference type="RefSeq" id="WP_005843292.1">
    <property type="nucleotide sequence ID" value="NZ_JANSWM010000047.1"/>
</dbReference>
<dbReference type="SMR" id="A6L3Y9"/>
<dbReference type="STRING" id="435590.BVU_2753"/>
<dbReference type="PaxDb" id="435590-BVU_2753"/>
<dbReference type="DNASU" id="5303716"/>
<dbReference type="GeneID" id="5303716"/>
<dbReference type="KEGG" id="bvu:BVU_2753"/>
<dbReference type="eggNOG" id="COG0228">
    <property type="taxonomic scope" value="Bacteria"/>
</dbReference>
<dbReference type="HOGENOM" id="CLU_100590_0_0_10"/>
<dbReference type="BioCyc" id="BVUL435590:G1G59-2864-MONOMER"/>
<dbReference type="Proteomes" id="UP000002861">
    <property type="component" value="Chromosome"/>
</dbReference>
<dbReference type="GO" id="GO:0005737">
    <property type="term" value="C:cytoplasm"/>
    <property type="evidence" value="ECO:0007669"/>
    <property type="project" value="UniProtKB-ARBA"/>
</dbReference>
<dbReference type="GO" id="GO:0015935">
    <property type="term" value="C:small ribosomal subunit"/>
    <property type="evidence" value="ECO:0007669"/>
    <property type="project" value="TreeGrafter"/>
</dbReference>
<dbReference type="GO" id="GO:0003735">
    <property type="term" value="F:structural constituent of ribosome"/>
    <property type="evidence" value="ECO:0007669"/>
    <property type="project" value="InterPro"/>
</dbReference>
<dbReference type="GO" id="GO:0006412">
    <property type="term" value="P:translation"/>
    <property type="evidence" value="ECO:0007669"/>
    <property type="project" value="UniProtKB-UniRule"/>
</dbReference>
<dbReference type="Gene3D" id="3.30.1320.10">
    <property type="match status" value="1"/>
</dbReference>
<dbReference type="HAMAP" id="MF_00385">
    <property type="entry name" value="Ribosomal_bS16"/>
    <property type="match status" value="1"/>
</dbReference>
<dbReference type="InterPro" id="IPR000307">
    <property type="entry name" value="Ribosomal_bS16"/>
</dbReference>
<dbReference type="InterPro" id="IPR023803">
    <property type="entry name" value="Ribosomal_bS16_dom_sf"/>
</dbReference>
<dbReference type="NCBIfam" id="NF011094">
    <property type="entry name" value="PRK14521.1"/>
    <property type="match status" value="1"/>
</dbReference>
<dbReference type="NCBIfam" id="TIGR00002">
    <property type="entry name" value="S16"/>
    <property type="match status" value="1"/>
</dbReference>
<dbReference type="PANTHER" id="PTHR12919">
    <property type="entry name" value="30S RIBOSOMAL PROTEIN S16"/>
    <property type="match status" value="1"/>
</dbReference>
<dbReference type="PANTHER" id="PTHR12919:SF20">
    <property type="entry name" value="SMALL RIBOSOMAL SUBUNIT PROTEIN BS16M"/>
    <property type="match status" value="1"/>
</dbReference>
<dbReference type="Pfam" id="PF00886">
    <property type="entry name" value="Ribosomal_S16"/>
    <property type="match status" value="1"/>
</dbReference>
<dbReference type="SUPFAM" id="SSF54565">
    <property type="entry name" value="Ribosomal protein S16"/>
    <property type="match status" value="1"/>
</dbReference>